<keyword id="KW-0067">ATP-binding</keyword>
<keyword id="KW-0238">DNA-binding</keyword>
<keyword id="KW-0255">Endonuclease</keyword>
<keyword id="KW-0378">Hydrolase</keyword>
<keyword id="KW-0540">Nuclease</keyword>
<keyword id="KW-0547">Nucleotide-binding</keyword>
<keyword id="KW-0694">RNA-binding</keyword>
<keyword id="KW-0699">rRNA-binding</keyword>
<name>MUTS2_LACJO</name>
<dbReference type="EC" id="3.1.-.-" evidence="1"/>
<dbReference type="EC" id="3.6.4.-" evidence="1"/>
<dbReference type="EMBL" id="AE017198">
    <property type="protein sequence ID" value="AAS08471.1"/>
    <property type="molecule type" value="Genomic_DNA"/>
</dbReference>
<dbReference type="RefSeq" id="WP_011161611.1">
    <property type="nucleotide sequence ID" value="NC_005362.1"/>
</dbReference>
<dbReference type="SMR" id="Q74KU8"/>
<dbReference type="KEGG" id="ljo:LJ_0479"/>
<dbReference type="PATRIC" id="fig|257314.6.peg.506"/>
<dbReference type="eggNOG" id="COG1193">
    <property type="taxonomic scope" value="Bacteria"/>
</dbReference>
<dbReference type="HOGENOM" id="CLU_011252_2_1_9"/>
<dbReference type="Proteomes" id="UP000000581">
    <property type="component" value="Chromosome"/>
</dbReference>
<dbReference type="GO" id="GO:0005524">
    <property type="term" value="F:ATP binding"/>
    <property type="evidence" value="ECO:0007669"/>
    <property type="project" value="UniProtKB-UniRule"/>
</dbReference>
<dbReference type="GO" id="GO:0016887">
    <property type="term" value="F:ATP hydrolysis activity"/>
    <property type="evidence" value="ECO:0007669"/>
    <property type="project" value="InterPro"/>
</dbReference>
<dbReference type="GO" id="GO:0140664">
    <property type="term" value="F:ATP-dependent DNA damage sensor activity"/>
    <property type="evidence" value="ECO:0007669"/>
    <property type="project" value="InterPro"/>
</dbReference>
<dbReference type="GO" id="GO:0004519">
    <property type="term" value="F:endonuclease activity"/>
    <property type="evidence" value="ECO:0007669"/>
    <property type="project" value="UniProtKB-UniRule"/>
</dbReference>
<dbReference type="GO" id="GO:0030983">
    <property type="term" value="F:mismatched DNA binding"/>
    <property type="evidence" value="ECO:0007669"/>
    <property type="project" value="InterPro"/>
</dbReference>
<dbReference type="GO" id="GO:0043023">
    <property type="term" value="F:ribosomal large subunit binding"/>
    <property type="evidence" value="ECO:0007669"/>
    <property type="project" value="UniProtKB-UniRule"/>
</dbReference>
<dbReference type="GO" id="GO:0019843">
    <property type="term" value="F:rRNA binding"/>
    <property type="evidence" value="ECO:0007669"/>
    <property type="project" value="UniProtKB-UniRule"/>
</dbReference>
<dbReference type="GO" id="GO:0006298">
    <property type="term" value="P:mismatch repair"/>
    <property type="evidence" value="ECO:0007669"/>
    <property type="project" value="InterPro"/>
</dbReference>
<dbReference type="GO" id="GO:0045910">
    <property type="term" value="P:negative regulation of DNA recombination"/>
    <property type="evidence" value="ECO:0007669"/>
    <property type="project" value="InterPro"/>
</dbReference>
<dbReference type="GO" id="GO:0072344">
    <property type="term" value="P:rescue of stalled ribosome"/>
    <property type="evidence" value="ECO:0007669"/>
    <property type="project" value="UniProtKB-UniRule"/>
</dbReference>
<dbReference type="CDD" id="cd03280">
    <property type="entry name" value="ABC_MutS2"/>
    <property type="match status" value="1"/>
</dbReference>
<dbReference type="FunFam" id="3.40.50.300:FF:000830">
    <property type="entry name" value="Endonuclease MutS2"/>
    <property type="match status" value="1"/>
</dbReference>
<dbReference type="Gene3D" id="3.30.1370.110">
    <property type="match status" value="1"/>
</dbReference>
<dbReference type="Gene3D" id="3.40.50.300">
    <property type="entry name" value="P-loop containing nucleotide triphosphate hydrolases"/>
    <property type="match status" value="1"/>
</dbReference>
<dbReference type="HAMAP" id="MF_00092">
    <property type="entry name" value="MutS2"/>
    <property type="match status" value="1"/>
</dbReference>
<dbReference type="InterPro" id="IPR000432">
    <property type="entry name" value="DNA_mismatch_repair_MutS_C"/>
</dbReference>
<dbReference type="InterPro" id="IPR007696">
    <property type="entry name" value="DNA_mismatch_repair_MutS_core"/>
</dbReference>
<dbReference type="InterPro" id="IPR036187">
    <property type="entry name" value="DNA_mismatch_repair_MutS_sf"/>
</dbReference>
<dbReference type="InterPro" id="IPR046893">
    <property type="entry name" value="MSSS"/>
</dbReference>
<dbReference type="InterPro" id="IPR045076">
    <property type="entry name" value="MutS"/>
</dbReference>
<dbReference type="InterPro" id="IPR005747">
    <property type="entry name" value="MutS2"/>
</dbReference>
<dbReference type="InterPro" id="IPR027417">
    <property type="entry name" value="P-loop_NTPase"/>
</dbReference>
<dbReference type="InterPro" id="IPR002625">
    <property type="entry name" value="Smr_dom"/>
</dbReference>
<dbReference type="InterPro" id="IPR036063">
    <property type="entry name" value="Smr_dom_sf"/>
</dbReference>
<dbReference type="NCBIfam" id="TIGR01069">
    <property type="entry name" value="mutS2"/>
    <property type="match status" value="1"/>
</dbReference>
<dbReference type="PANTHER" id="PTHR48466:SF2">
    <property type="entry name" value="OS10G0509000 PROTEIN"/>
    <property type="match status" value="1"/>
</dbReference>
<dbReference type="PANTHER" id="PTHR48466">
    <property type="entry name" value="OS10G0509000 PROTEIN-RELATED"/>
    <property type="match status" value="1"/>
</dbReference>
<dbReference type="Pfam" id="PF20297">
    <property type="entry name" value="MSSS"/>
    <property type="match status" value="1"/>
</dbReference>
<dbReference type="Pfam" id="PF00488">
    <property type="entry name" value="MutS_V"/>
    <property type="match status" value="1"/>
</dbReference>
<dbReference type="Pfam" id="PF01713">
    <property type="entry name" value="Smr"/>
    <property type="match status" value="1"/>
</dbReference>
<dbReference type="PIRSF" id="PIRSF005814">
    <property type="entry name" value="MutS_YshD"/>
    <property type="match status" value="1"/>
</dbReference>
<dbReference type="SMART" id="SM00534">
    <property type="entry name" value="MUTSac"/>
    <property type="match status" value="1"/>
</dbReference>
<dbReference type="SMART" id="SM00533">
    <property type="entry name" value="MUTSd"/>
    <property type="match status" value="1"/>
</dbReference>
<dbReference type="SMART" id="SM00463">
    <property type="entry name" value="SMR"/>
    <property type="match status" value="1"/>
</dbReference>
<dbReference type="SUPFAM" id="SSF48334">
    <property type="entry name" value="DNA repair protein MutS, domain III"/>
    <property type="match status" value="1"/>
</dbReference>
<dbReference type="SUPFAM" id="SSF52540">
    <property type="entry name" value="P-loop containing nucleoside triphosphate hydrolases"/>
    <property type="match status" value="1"/>
</dbReference>
<dbReference type="SUPFAM" id="SSF160443">
    <property type="entry name" value="SMR domain-like"/>
    <property type="match status" value="1"/>
</dbReference>
<dbReference type="PROSITE" id="PS50828">
    <property type="entry name" value="SMR"/>
    <property type="match status" value="1"/>
</dbReference>
<protein>
    <recommendedName>
        <fullName evidence="1">Endonuclease MutS2</fullName>
        <ecNumber evidence="1">3.1.-.-</ecNumber>
    </recommendedName>
    <alternativeName>
        <fullName evidence="1">Ribosome-associated protein quality control-upstream factor</fullName>
        <shortName evidence="1">RQC-upstream factor</shortName>
        <shortName evidence="1">RqcU</shortName>
        <ecNumber evidence="1">3.6.4.-</ecNumber>
    </alternativeName>
</protein>
<evidence type="ECO:0000255" key="1">
    <source>
        <dbReference type="HAMAP-Rule" id="MF_00092"/>
    </source>
</evidence>
<feature type="chain" id="PRO_1000093366" description="Endonuclease MutS2">
    <location>
        <begin position="1"/>
        <end position="788"/>
    </location>
</feature>
<feature type="domain" description="Smr" evidence="1">
    <location>
        <begin position="713"/>
        <end position="788"/>
    </location>
</feature>
<feature type="binding site" evidence="1">
    <location>
        <begin position="334"/>
        <end position="341"/>
    </location>
    <ligand>
        <name>ATP</name>
        <dbReference type="ChEBI" id="CHEBI:30616"/>
    </ligand>
</feature>
<sequence length="788" mass="88493">MNSKIIEKLEYNRIIKQLSDLAITVPAKEQALTLMPSSNFDEVKKSIDQTRVLSNVLRVKGPMPITDFKDVRASLKRLKVKANLNGEELGNIFLILSLAKDVSQFTADLEEREIDTRPIEKTLKNLAIPEDLFKKLNQAIEYDGTVKDTASSKLMQLRHDIQSNETDIKNHMNDYISGKHTQYLSENIVTIRDGRYVLPVKQEYKNKFGGVVHDQSASGQTLFVEPQAVLVLNNRQQNLMAQERQEIHRILIELSELAGMYQKEIKNNADALTQLDFLSAKSKLAKAMKATEPVLNQDHVIKLRKARHPLIDPKKVVPNNIELGTSFDTMLITGPNTGGKTITLKTLGLLQLMAQAGLFITAEEGSQLTVFNEIYADIGDEQSIEQSLSTFSSHMDQIIKIMKDVTEDDLVLIDELGAGTDPEEGASLAIAILDDLRGAQAKIAITTHYPELKLYGYNRARTTNASMEFDLKKLAPTYRLRIGIPGQSNAFAIAHQLGMNEVVVDKARSLMNDEDSDINKMIERLTEQTKAAEQLHETLKQNVDQSITLKRQLQNGLDWYNQQVQKQLEKAQEKADEMLAKKRQKADKIINDLEEQRRAGGQVRTNKVIEAKGALNKLERENQNLAQNKVLQREKRRHDVSVGDTVKVLSYGQQGVITKKLADHEFEVQIGILKVKVTDRDVEKISTQAAPKKAERAVRSSRDLRSTRASSELDLRGQRYEEALTNLDRYIDSSLLAGLNTVTIIHGIGTGAIRNGVQQYLKRNRHVKSYSYAPANQGGTGATIVYLQ</sequence>
<accession>Q74KU8</accession>
<gene>
    <name evidence="1" type="primary">mutS2</name>
    <name evidence="1" type="synonym">rqcU</name>
    <name type="ordered locus">LJ_0479</name>
</gene>
<proteinExistence type="inferred from homology"/>
<comment type="function">
    <text evidence="1">Endonuclease that is involved in the suppression of homologous recombination and thus may have a key role in the control of bacterial genetic diversity.</text>
</comment>
<comment type="function">
    <text evidence="1">Acts as a ribosome collision sensor, splitting the ribosome into its 2 subunits. Detects stalled/collided 70S ribosomes which it binds and splits by an ATP-hydrolysis driven conformational change. Acts upstream of the ribosome quality control system (RQC), a ribosome-associated complex that mediates the extraction of incompletely synthesized nascent chains from stalled ribosomes and their subsequent degradation. Probably generates substrates for RQC.</text>
</comment>
<comment type="subunit">
    <text evidence="1">Homodimer. Binds to stalled ribosomes, contacting rRNA.</text>
</comment>
<comment type="similarity">
    <text evidence="1">Belongs to the DNA mismatch repair MutS family. MutS2 subfamily.</text>
</comment>
<reference key="1">
    <citation type="journal article" date="2004" name="Proc. Natl. Acad. Sci. U.S.A.">
        <title>The genome sequence of the probiotic intestinal bacterium Lactobacillus johnsonii NCC 533.</title>
        <authorList>
            <person name="Pridmore R.D."/>
            <person name="Berger B."/>
            <person name="Desiere F."/>
            <person name="Vilanova D."/>
            <person name="Barretto C."/>
            <person name="Pittet A.-C."/>
            <person name="Zwahlen M.-C."/>
            <person name="Rouvet M."/>
            <person name="Altermann E."/>
            <person name="Barrangou R."/>
            <person name="Mollet B."/>
            <person name="Mercenier A."/>
            <person name="Klaenhammer T."/>
            <person name="Arigoni F."/>
            <person name="Schell M.A."/>
        </authorList>
    </citation>
    <scope>NUCLEOTIDE SEQUENCE [LARGE SCALE GENOMIC DNA]</scope>
    <source>
        <strain>CNCM I-1225 / La1 / NCC 533</strain>
    </source>
</reference>
<organism>
    <name type="scientific">Lactobacillus johnsonii (strain CNCM I-12250 / La1 / NCC 533)</name>
    <dbReference type="NCBI Taxonomy" id="257314"/>
    <lineage>
        <taxon>Bacteria</taxon>
        <taxon>Bacillati</taxon>
        <taxon>Bacillota</taxon>
        <taxon>Bacilli</taxon>
        <taxon>Lactobacillales</taxon>
        <taxon>Lactobacillaceae</taxon>
        <taxon>Lactobacillus</taxon>
    </lineage>
</organism>